<proteinExistence type="inferred from homology"/>
<organism>
    <name type="scientific">Synechococcus sp. (strain RCC307)</name>
    <dbReference type="NCBI Taxonomy" id="316278"/>
    <lineage>
        <taxon>Bacteria</taxon>
        <taxon>Bacillati</taxon>
        <taxon>Cyanobacteriota</taxon>
        <taxon>Cyanophyceae</taxon>
        <taxon>Synechococcales</taxon>
        <taxon>Synechococcaceae</taxon>
        <taxon>Synechococcus</taxon>
    </lineage>
</organism>
<gene>
    <name evidence="1" type="primary">petM</name>
    <name type="ordered locus">SynRCC307_1689</name>
</gene>
<name>PETM_SYNR3</name>
<evidence type="ECO:0000255" key="1">
    <source>
        <dbReference type="HAMAP-Rule" id="MF_00396"/>
    </source>
</evidence>
<reference key="1">
    <citation type="submission" date="2006-05" db="EMBL/GenBank/DDBJ databases">
        <authorList>
            <consortium name="Genoscope"/>
        </authorList>
    </citation>
    <scope>NUCLEOTIDE SEQUENCE [LARGE SCALE GENOMIC DNA]</scope>
    <source>
        <strain>RCC307</strain>
    </source>
</reference>
<sequence length="32" mass="3287">MASEIFGTAALFWVLIPLGLAGGALLLKLQGD</sequence>
<dbReference type="EMBL" id="CT978603">
    <property type="protein sequence ID" value="CAK28592.1"/>
    <property type="molecule type" value="Genomic_DNA"/>
</dbReference>
<dbReference type="SMR" id="A5GUN3"/>
<dbReference type="STRING" id="316278.SynRCC307_1689"/>
<dbReference type="KEGG" id="syr:SynRCC307_1689"/>
<dbReference type="eggNOG" id="ENOG502ZN58">
    <property type="taxonomic scope" value="Bacteria"/>
</dbReference>
<dbReference type="HOGENOM" id="CLU_216743_1_0_3"/>
<dbReference type="Proteomes" id="UP000001115">
    <property type="component" value="Chromosome"/>
</dbReference>
<dbReference type="GO" id="GO:0009512">
    <property type="term" value="C:cytochrome b6f complex"/>
    <property type="evidence" value="ECO:0007669"/>
    <property type="project" value="InterPro"/>
</dbReference>
<dbReference type="GO" id="GO:0031676">
    <property type="term" value="C:plasma membrane-derived thylakoid membrane"/>
    <property type="evidence" value="ECO:0007669"/>
    <property type="project" value="UniProtKB-SubCell"/>
</dbReference>
<dbReference type="GO" id="GO:0009055">
    <property type="term" value="F:electron transfer activity"/>
    <property type="evidence" value="ECO:0007669"/>
    <property type="project" value="UniProtKB-UniRule"/>
</dbReference>
<dbReference type="GO" id="GO:0015979">
    <property type="term" value="P:photosynthesis"/>
    <property type="evidence" value="ECO:0007669"/>
    <property type="project" value="UniProtKB-KW"/>
</dbReference>
<dbReference type="HAMAP" id="MF_00396">
    <property type="entry name" value="Cytb6_f_PetM"/>
    <property type="match status" value="1"/>
</dbReference>
<dbReference type="InterPro" id="IPR012595">
    <property type="entry name" value="PetM_cyt_b6/f_cplx_su7"/>
</dbReference>
<dbReference type="NCBIfam" id="NF008826">
    <property type="entry name" value="PRK11876.1-2"/>
    <property type="match status" value="1"/>
</dbReference>
<dbReference type="Pfam" id="PF08041">
    <property type="entry name" value="PetM"/>
    <property type="match status" value="1"/>
</dbReference>
<keyword id="KW-0249">Electron transport</keyword>
<keyword id="KW-0472">Membrane</keyword>
<keyword id="KW-0602">Photosynthesis</keyword>
<keyword id="KW-1185">Reference proteome</keyword>
<keyword id="KW-0793">Thylakoid</keyword>
<keyword id="KW-0812">Transmembrane</keyword>
<keyword id="KW-1133">Transmembrane helix</keyword>
<keyword id="KW-0813">Transport</keyword>
<comment type="function">
    <text evidence="1">Component of the cytochrome b6-f complex, which mediates electron transfer between photosystem II (PSII) and photosystem I (PSI), cyclic electron flow around PSI, and state transitions.</text>
</comment>
<comment type="subunit">
    <text evidence="1">The 4 large subunits of the cytochrome b6-f complex are cytochrome b6, subunit IV (17 kDa polypeptide, PetD), cytochrome f and the Rieske protein, while the 4 small subunits are PetG, PetL, PetM and PetN. The complex functions as a dimer.</text>
</comment>
<comment type="subcellular location">
    <subcellularLocation>
        <location evidence="1">Cellular thylakoid membrane</location>
        <topology evidence="1">Single-pass membrane protein</topology>
    </subcellularLocation>
</comment>
<comment type="similarity">
    <text evidence="1">Belongs to the PetM family.</text>
</comment>
<feature type="chain" id="PRO_1000049592" description="Cytochrome b6-f complex subunit 7">
    <location>
        <begin position="1"/>
        <end position="32"/>
    </location>
</feature>
<feature type="transmembrane region" description="Helical" evidence="1">
    <location>
        <begin position="9"/>
        <end position="27"/>
    </location>
</feature>
<accession>A5GUN3</accession>
<protein>
    <recommendedName>
        <fullName evidence="1">Cytochrome b6-f complex subunit 7</fullName>
    </recommendedName>
    <alternativeName>
        <fullName evidence="1">Cytochrome b6-f complex subunit PetM</fullName>
    </alternativeName>
    <alternativeName>
        <fullName evidence="1">Cytochrome b6-f complex subunit VII</fullName>
    </alternativeName>
</protein>